<name>WNT3A_PLEJO</name>
<gene>
    <name type="primary">WNT-3A</name>
</gene>
<reference key="1">
    <citation type="journal article" date="1992" name="Proc. Natl. Acad. Sci. U.S.A.">
        <title>Diversification of the Wnt gene family on the ancestral lineage of vertebrates.</title>
        <authorList>
            <person name="Sidow A."/>
        </authorList>
    </citation>
    <scope>NUCLEOTIDE SEQUENCE [GENOMIC DNA]</scope>
</reference>
<comment type="function">
    <text evidence="1 3">Ligand for members of the frizzled family of seven transmembrane receptors. Functions in the canonical Wnt signaling pathway that results in activation of transcription factors of the TCF/LEF family. Required for normal embryonic mesoderm development and formation of caudal somites. Required for normal morphogenesis of the developing neural tube.</text>
</comment>
<comment type="subcellular location">
    <subcellularLocation>
        <location evidence="1">Secreted</location>
        <location evidence="1">Extracellular space</location>
        <location evidence="1">Extracellular matrix</location>
    </subcellularLocation>
    <subcellularLocation>
        <location evidence="1">Secreted</location>
    </subcellularLocation>
</comment>
<comment type="PTM">
    <text evidence="1">Disulfide bonds have critical and distinct roles in secretion and activity. Loss of each conserved cysteine results in high molecular weight oxidized Wnt oligomers, which are formed through inter-Wnt disulfide bonding.</text>
</comment>
<comment type="PTM">
    <text evidence="1 3">Palmitoleoylation is required for efficient binding to frizzled receptors. Depalmitoleoylation leads to Wnt signaling pathway inhibition.</text>
</comment>
<comment type="similarity">
    <text evidence="5">Belongs to the Wnt family.</text>
</comment>
<feature type="chain" id="PRO_0000200615" description="Protein Wnt-3a">
    <location>
        <begin position="1" status="less than"/>
        <end position="123" status="greater than"/>
    </location>
</feature>
<feature type="lipid moiety-binding region" description="O-palmitoleoyl serine" evidence="3">
    <location>
        <position position="1"/>
    </location>
</feature>
<feature type="glycosylation site" description="N-linked (GlcNAc...) asparagine" evidence="4">
    <location>
        <position position="90"/>
    </location>
</feature>
<feature type="disulfide bond" evidence="2">
    <location>
        <begin position="89"/>
        <end position="104"/>
    </location>
</feature>
<feature type="non-terminal residue">
    <location>
        <position position="1"/>
    </location>
</feature>
<feature type="non-terminal residue">
    <location>
        <position position="123"/>
    </location>
</feature>
<sequence length="123" mass="14266">SGSCEVKTCWWSQPDFRVIGDFLKDKYDSASEMVVEKHRESRGWVETLRPKYTFFKPPTERDLVYYESSPNFCEPNPETGSFGTRDRICNVTSHGIDGCDLLCCGRGHNTRTEKRKEKCHCIF</sequence>
<dbReference type="EMBL" id="M91290">
    <property type="protein sequence ID" value="AAA49458.1"/>
    <property type="molecule type" value="Genomic_DNA"/>
</dbReference>
<dbReference type="SMR" id="P28133"/>
<dbReference type="GlyCosmos" id="P28133">
    <property type="glycosylation" value="1 site, No reported glycans"/>
</dbReference>
<dbReference type="GO" id="GO:0005615">
    <property type="term" value="C:extracellular space"/>
    <property type="evidence" value="ECO:0000250"/>
    <property type="project" value="UniProtKB"/>
</dbReference>
<dbReference type="GO" id="GO:0005125">
    <property type="term" value="F:cytokine activity"/>
    <property type="evidence" value="ECO:0007669"/>
    <property type="project" value="TreeGrafter"/>
</dbReference>
<dbReference type="GO" id="GO:0005109">
    <property type="term" value="F:frizzled binding"/>
    <property type="evidence" value="ECO:0007669"/>
    <property type="project" value="TreeGrafter"/>
</dbReference>
<dbReference type="GO" id="GO:0060070">
    <property type="term" value="P:canonical Wnt signaling pathway"/>
    <property type="evidence" value="ECO:0000250"/>
    <property type="project" value="UniProtKB"/>
</dbReference>
<dbReference type="GO" id="GO:0045165">
    <property type="term" value="P:cell fate commitment"/>
    <property type="evidence" value="ECO:0007669"/>
    <property type="project" value="TreeGrafter"/>
</dbReference>
<dbReference type="GO" id="GO:0030182">
    <property type="term" value="P:neuron differentiation"/>
    <property type="evidence" value="ECO:0007669"/>
    <property type="project" value="TreeGrafter"/>
</dbReference>
<dbReference type="FunFam" id="3.30.2460.20:FF:000009">
    <property type="entry name" value="Protein Wnt-3a"/>
    <property type="match status" value="1"/>
</dbReference>
<dbReference type="Gene3D" id="3.30.2460.20">
    <property type="match status" value="1"/>
</dbReference>
<dbReference type="InterPro" id="IPR005817">
    <property type="entry name" value="Wnt"/>
</dbReference>
<dbReference type="InterPro" id="IPR043158">
    <property type="entry name" value="Wnt_C"/>
</dbReference>
<dbReference type="PANTHER" id="PTHR12027:SF88">
    <property type="entry name" value="PROTEIN WNT-3A"/>
    <property type="match status" value="1"/>
</dbReference>
<dbReference type="PANTHER" id="PTHR12027">
    <property type="entry name" value="WNT RELATED"/>
    <property type="match status" value="1"/>
</dbReference>
<dbReference type="Pfam" id="PF00110">
    <property type="entry name" value="wnt"/>
    <property type="match status" value="1"/>
</dbReference>
<dbReference type="SMART" id="SM00097">
    <property type="entry name" value="WNT1"/>
    <property type="match status" value="1"/>
</dbReference>
<keyword id="KW-0217">Developmental protein</keyword>
<keyword id="KW-1015">Disulfide bond</keyword>
<keyword id="KW-0272">Extracellular matrix</keyword>
<keyword id="KW-0325">Glycoprotein</keyword>
<keyword id="KW-0449">Lipoprotein</keyword>
<keyword id="KW-0964">Secreted</keyword>
<keyword id="KW-0879">Wnt signaling pathway</keyword>
<accession>P28133</accession>
<organism>
    <name type="scientific">Plethodon jordani</name>
    <name type="common">Red-cheeked salamander</name>
    <dbReference type="NCBI Taxonomy" id="8336"/>
    <lineage>
        <taxon>Eukaryota</taxon>
        <taxon>Metazoa</taxon>
        <taxon>Chordata</taxon>
        <taxon>Craniata</taxon>
        <taxon>Vertebrata</taxon>
        <taxon>Euteleostomi</taxon>
        <taxon>Amphibia</taxon>
        <taxon>Batrachia</taxon>
        <taxon>Caudata</taxon>
        <taxon>Salamandroidea</taxon>
        <taxon>Plethodontidae</taxon>
        <taxon>Plethodontinae</taxon>
        <taxon>Plethodon</taxon>
    </lineage>
</organism>
<evidence type="ECO:0000250" key="1">
    <source>
        <dbReference type="UniProtKB" id="P27467"/>
    </source>
</evidence>
<evidence type="ECO:0000250" key="2">
    <source>
        <dbReference type="UniProtKB" id="P28026"/>
    </source>
</evidence>
<evidence type="ECO:0000250" key="3">
    <source>
        <dbReference type="UniProtKB" id="P56704"/>
    </source>
</evidence>
<evidence type="ECO:0000255" key="4"/>
<evidence type="ECO:0000305" key="5"/>
<protein>
    <recommendedName>
        <fullName>Protein Wnt-3a</fullName>
    </recommendedName>
</protein>
<proteinExistence type="inferred from homology"/>